<accession>Q9JIF3</accession>
<accession>Q5BKP8</accession>
<accession>Q9JJP4</accession>
<accession>Q9JJZ0</accession>
<name>SL2A8_MOUSE</name>
<proteinExistence type="evidence at protein level"/>
<reference key="1">
    <citation type="journal article" date="2000" name="J. Biol. Chem.">
        <title>GLUTX1, a novel mammalian glucose transporter expressed in the central nervous system and insulin-sensitive tissues.</title>
        <authorList>
            <person name="Ibberson M.R."/>
            <person name="Uldry M.A."/>
            <person name="Thorens B."/>
        </authorList>
    </citation>
    <scope>NUCLEOTIDE SEQUENCE [MRNA]</scope>
</reference>
<reference key="2">
    <citation type="journal article" date="2000" name="J. Biol. Chem.">
        <title>GLUT8, a novel member of the sugar transport facilitator family with glucose transport activity.</title>
        <authorList>
            <person name="Doege H."/>
            <person name="Schuermann A."/>
            <person name="Bahrenberg G."/>
            <person name="Brauers A."/>
            <person name="Joost H.-G."/>
        </authorList>
    </citation>
    <scope>NUCLEOTIDE SEQUENCE [MRNA]</scope>
    <scope>FUNCTION</scope>
    <scope>ACTIVITY REGULATION</scope>
    <source>
        <tissue>Testis</tissue>
    </source>
</reference>
<reference key="3">
    <citation type="journal article" date="2000" name="Proc. Natl. Acad. Sci. U.S.A.">
        <title>GLUT8 is a glucose transporter responsible for insulin-stimulated glucose uptake in the blastocyst.</title>
        <authorList>
            <person name="Carayannopoulos M.O."/>
            <person name="Chi M.M.-Y."/>
            <person name="Cui Y."/>
            <person name="Pingsterhaus J.M."/>
            <person name="McKnight R.A."/>
            <person name="Mueckler M."/>
            <person name="Devaskar S.U."/>
            <person name="Moley K.H."/>
        </authorList>
    </citation>
    <scope>NUCLEOTIDE SEQUENCE [MRNA]</scope>
    <scope>FUNCTION</scope>
    <scope>SUBCELLULAR LOCATION</scope>
    <scope>TISSUE SPECIFICITY</scope>
    <scope>DEVELOPMENTAL STAGE</scope>
    <source>
        <strain>129</strain>
        <tissue>Embryonic carcinoma</tissue>
    </source>
</reference>
<reference key="4">
    <citation type="journal article" date="2001" name="Biochem. Biophys. Res. Commun.">
        <title>Mouse GLUT8: genomic organization and regulation of expression in 3T3-L1 adipocytes by glucose.</title>
        <authorList>
            <person name="Scheepers A."/>
            <person name="Doege H."/>
            <person name="Joost H.-G."/>
            <person name="Schuermann A."/>
        </authorList>
    </citation>
    <scope>NUCLEOTIDE SEQUENCE [GENOMIC DNA]</scope>
    <scope>INDUCTION</scope>
    <source>
        <strain>129/Ola</strain>
        <tissue>Spleen</tissue>
    </source>
</reference>
<reference key="5">
    <citation type="journal article" date="2005" name="Science">
        <title>The transcriptional landscape of the mammalian genome.</title>
        <authorList>
            <person name="Carninci P."/>
            <person name="Kasukawa T."/>
            <person name="Katayama S."/>
            <person name="Gough J."/>
            <person name="Frith M.C."/>
            <person name="Maeda N."/>
            <person name="Oyama R."/>
            <person name="Ravasi T."/>
            <person name="Lenhard B."/>
            <person name="Wells C."/>
            <person name="Kodzius R."/>
            <person name="Shimokawa K."/>
            <person name="Bajic V.B."/>
            <person name="Brenner S.E."/>
            <person name="Batalov S."/>
            <person name="Forrest A.R."/>
            <person name="Zavolan M."/>
            <person name="Davis M.J."/>
            <person name="Wilming L.G."/>
            <person name="Aidinis V."/>
            <person name="Allen J.E."/>
            <person name="Ambesi-Impiombato A."/>
            <person name="Apweiler R."/>
            <person name="Aturaliya R.N."/>
            <person name="Bailey T.L."/>
            <person name="Bansal M."/>
            <person name="Baxter L."/>
            <person name="Beisel K.W."/>
            <person name="Bersano T."/>
            <person name="Bono H."/>
            <person name="Chalk A.M."/>
            <person name="Chiu K.P."/>
            <person name="Choudhary V."/>
            <person name="Christoffels A."/>
            <person name="Clutterbuck D.R."/>
            <person name="Crowe M.L."/>
            <person name="Dalla E."/>
            <person name="Dalrymple B.P."/>
            <person name="de Bono B."/>
            <person name="Della Gatta G."/>
            <person name="di Bernardo D."/>
            <person name="Down T."/>
            <person name="Engstrom P."/>
            <person name="Fagiolini M."/>
            <person name="Faulkner G."/>
            <person name="Fletcher C.F."/>
            <person name="Fukushima T."/>
            <person name="Furuno M."/>
            <person name="Futaki S."/>
            <person name="Gariboldi M."/>
            <person name="Georgii-Hemming P."/>
            <person name="Gingeras T.R."/>
            <person name="Gojobori T."/>
            <person name="Green R.E."/>
            <person name="Gustincich S."/>
            <person name="Harbers M."/>
            <person name="Hayashi Y."/>
            <person name="Hensch T.K."/>
            <person name="Hirokawa N."/>
            <person name="Hill D."/>
            <person name="Huminiecki L."/>
            <person name="Iacono M."/>
            <person name="Ikeo K."/>
            <person name="Iwama A."/>
            <person name="Ishikawa T."/>
            <person name="Jakt M."/>
            <person name="Kanapin A."/>
            <person name="Katoh M."/>
            <person name="Kawasawa Y."/>
            <person name="Kelso J."/>
            <person name="Kitamura H."/>
            <person name="Kitano H."/>
            <person name="Kollias G."/>
            <person name="Krishnan S.P."/>
            <person name="Kruger A."/>
            <person name="Kummerfeld S.K."/>
            <person name="Kurochkin I.V."/>
            <person name="Lareau L.F."/>
            <person name="Lazarevic D."/>
            <person name="Lipovich L."/>
            <person name="Liu J."/>
            <person name="Liuni S."/>
            <person name="McWilliam S."/>
            <person name="Madan Babu M."/>
            <person name="Madera M."/>
            <person name="Marchionni L."/>
            <person name="Matsuda H."/>
            <person name="Matsuzawa S."/>
            <person name="Miki H."/>
            <person name="Mignone F."/>
            <person name="Miyake S."/>
            <person name="Morris K."/>
            <person name="Mottagui-Tabar S."/>
            <person name="Mulder N."/>
            <person name="Nakano N."/>
            <person name="Nakauchi H."/>
            <person name="Ng P."/>
            <person name="Nilsson R."/>
            <person name="Nishiguchi S."/>
            <person name="Nishikawa S."/>
            <person name="Nori F."/>
            <person name="Ohara O."/>
            <person name="Okazaki Y."/>
            <person name="Orlando V."/>
            <person name="Pang K.C."/>
            <person name="Pavan W.J."/>
            <person name="Pavesi G."/>
            <person name="Pesole G."/>
            <person name="Petrovsky N."/>
            <person name="Piazza S."/>
            <person name="Reed J."/>
            <person name="Reid J.F."/>
            <person name="Ring B.Z."/>
            <person name="Ringwald M."/>
            <person name="Rost B."/>
            <person name="Ruan Y."/>
            <person name="Salzberg S.L."/>
            <person name="Sandelin A."/>
            <person name="Schneider C."/>
            <person name="Schoenbach C."/>
            <person name="Sekiguchi K."/>
            <person name="Semple C.A."/>
            <person name="Seno S."/>
            <person name="Sessa L."/>
            <person name="Sheng Y."/>
            <person name="Shibata Y."/>
            <person name="Shimada H."/>
            <person name="Shimada K."/>
            <person name="Silva D."/>
            <person name="Sinclair B."/>
            <person name="Sperling S."/>
            <person name="Stupka E."/>
            <person name="Sugiura K."/>
            <person name="Sultana R."/>
            <person name="Takenaka Y."/>
            <person name="Taki K."/>
            <person name="Tammoja K."/>
            <person name="Tan S.L."/>
            <person name="Tang S."/>
            <person name="Taylor M.S."/>
            <person name="Tegner J."/>
            <person name="Teichmann S.A."/>
            <person name="Ueda H.R."/>
            <person name="van Nimwegen E."/>
            <person name="Verardo R."/>
            <person name="Wei C.L."/>
            <person name="Yagi K."/>
            <person name="Yamanishi H."/>
            <person name="Zabarovsky E."/>
            <person name="Zhu S."/>
            <person name="Zimmer A."/>
            <person name="Hide W."/>
            <person name="Bult C."/>
            <person name="Grimmond S.M."/>
            <person name="Teasdale R.D."/>
            <person name="Liu E.T."/>
            <person name="Brusic V."/>
            <person name="Quackenbush J."/>
            <person name="Wahlestedt C."/>
            <person name="Mattick J.S."/>
            <person name="Hume D.A."/>
            <person name="Kai C."/>
            <person name="Sasaki D."/>
            <person name="Tomaru Y."/>
            <person name="Fukuda S."/>
            <person name="Kanamori-Katayama M."/>
            <person name="Suzuki M."/>
            <person name="Aoki J."/>
            <person name="Arakawa T."/>
            <person name="Iida J."/>
            <person name="Imamura K."/>
            <person name="Itoh M."/>
            <person name="Kato T."/>
            <person name="Kawaji H."/>
            <person name="Kawagashira N."/>
            <person name="Kawashima T."/>
            <person name="Kojima M."/>
            <person name="Kondo S."/>
            <person name="Konno H."/>
            <person name="Nakano K."/>
            <person name="Ninomiya N."/>
            <person name="Nishio T."/>
            <person name="Okada M."/>
            <person name="Plessy C."/>
            <person name="Shibata K."/>
            <person name="Shiraki T."/>
            <person name="Suzuki S."/>
            <person name="Tagami M."/>
            <person name="Waki K."/>
            <person name="Watahiki A."/>
            <person name="Okamura-Oho Y."/>
            <person name="Suzuki H."/>
            <person name="Kawai J."/>
            <person name="Hayashizaki Y."/>
        </authorList>
    </citation>
    <scope>NUCLEOTIDE SEQUENCE [LARGE SCALE MRNA]</scope>
    <source>
        <strain>C57BL/6J</strain>
        <strain>NOD</strain>
        <tissue>Head</tissue>
    </source>
</reference>
<reference key="6">
    <citation type="journal article" date="2009" name="PLoS Biol.">
        <title>Lineage-specific biology revealed by a finished genome assembly of the mouse.</title>
        <authorList>
            <person name="Church D.M."/>
            <person name="Goodstadt L."/>
            <person name="Hillier L.W."/>
            <person name="Zody M.C."/>
            <person name="Goldstein S."/>
            <person name="She X."/>
            <person name="Bult C.J."/>
            <person name="Agarwala R."/>
            <person name="Cherry J.L."/>
            <person name="DiCuccio M."/>
            <person name="Hlavina W."/>
            <person name="Kapustin Y."/>
            <person name="Meric P."/>
            <person name="Maglott D."/>
            <person name="Birtle Z."/>
            <person name="Marques A.C."/>
            <person name="Graves T."/>
            <person name="Zhou S."/>
            <person name="Teague B."/>
            <person name="Potamousis K."/>
            <person name="Churas C."/>
            <person name="Place M."/>
            <person name="Herschleb J."/>
            <person name="Runnheim R."/>
            <person name="Forrest D."/>
            <person name="Amos-Landgraf J."/>
            <person name="Schwartz D.C."/>
            <person name="Cheng Z."/>
            <person name="Lindblad-Toh K."/>
            <person name="Eichler E.E."/>
            <person name="Ponting C.P."/>
        </authorList>
    </citation>
    <scope>NUCLEOTIDE SEQUENCE [LARGE SCALE GENOMIC DNA]</scope>
    <source>
        <strain>C57BL/6J</strain>
    </source>
</reference>
<reference key="7">
    <citation type="submission" date="2005-07" db="EMBL/GenBank/DDBJ databases">
        <authorList>
            <person name="Mural R.J."/>
            <person name="Adams M.D."/>
            <person name="Myers E.W."/>
            <person name="Smith H.O."/>
            <person name="Venter J.C."/>
        </authorList>
    </citation>
    <scope>NUCLEOTIDE SEQUENCE [LARGE SCALE GENOMIC DNA]</scope>
</reference>
<reference key="8">
    <citation type="journal article" date="2004" name="Genome Res.">
        <title>The status, quality, and expansion of the NIH full-length cDNA project: the Mammalian Gene Collection (MGC).</title>
        <authorList>
            <consortium name="The MGC Project Team"/>
        </authorList>
    </citation>
    <scope>NUCLEOTIDE SEQUENCE [LARGE SCALE MRNA]</scope>
    <source>
        <tissue>Heart</tissue>
    </source>
</reference>
<reference key="9">
    <citation type="journal article" date="2006" name="J. Cell Sci.">
        <title>Endocytosis of the glucose transporter GLUT8 is mediated by interaction of a dileucine motif with the beta2-adaptin subunit of the AP-2 adaptor complex.</title>
        <authorList>
            <person name="Schmidt U."/>
            <person name="Briese S."/>
            <person name="Leicht K."/>
            <person name="Schuermann A."/>
            <person name="Joost H.-G."/>
            <person name="Al-Hasani H."/>
        </authorList>
    </citation>
    <scope>INTERACTION WITH AP2B1</scope>
    <scope>MUTAGENESIS OF 12-LEU-LEU-13</scope>
</reference>
<reference key="10">
    <citation type="journal article" date="2010" name="Cell">
        <title>A tissue-specific atlas of mouse protein phosphorylation and expression.</title>
        <authorList>
            <person name="Huttlin E.L."/>
            <person name="Jedrychowski M.P."/>
            <person name="Elias J.E."/>
            <person name="Goswami T."/>
            <person name="Rad R."/>
            <person name="Beausoleil S.A."/>
            <person name="Villen J."/>
            <person name="Haas W."/>
            <person name="Sowa M.E."/>
            <person name="Gygi S.P."/>
        </authorList>
    </citation>
    <scope>IDENTIFICATION BY MASS SPECTROMETRY [LARGE SCALE ANALYSIS]</scope>
    <source>
        <tissue>Testis</tissue>
    </source>
</reference>
<reference key="11">
    <citation type="journal article" date="2013" name="J. Biol. Chem.">
        <title>Intestinal dehydroascorbic acid (DHA) transport mediated by the facilitative sugar transporters, GLUT2 and GLUT8.</title>
        <authorList>
            <person name="Corpe C.P."/>
            <person name="Eck P."/>
            <person name="Wang J."/>
            <person name="Al-Hasani H."/>
            <person name="Levine M."/>
        </authorList>
    </citation>
    <scope>FUNCTION</scope>
    <scope>TRANSPORTER ACTIVITY</scope>
    <scope>BIOPHYSICOCHEMICAL PROPERTIES</scope>
</reference>
<reference key="12">
    <citation type="journal article" date="2016" name="Sci. Rep.">
        <title>SLC2A8 (GLUT8) is a mammalian trehalose transporter required for trehalose-induced autophagy.</title>
        <authorList>
            <person name="Mayer A.L."/>
            <person name="Higgins C.B."/>
            <person name="Heitmeier M.R."/>
            <person name="Kraft T.E."/>
            <person name="Qian X."/>
            <person name="Crowley J.R."/>
            <person name="Hyrc K.L."/>
            <person name="Beatty W.L."/>
            <person name="Yarasheski K.E."/>
            <person name="Hruz P.W."/>
            <person name="DeBosch B.J."/>
        </authorList>
    </citation>
    <scope>FUNCTION</scope>
    <scope>TRANSPORTER ACTIVITY</scope>
</reference>
<sequence>MSPEDPQETQPLLRPPEARTPRGRRVFLASFAAALGPLSFGFALGYSSPAIPSLRRTAPPALRLGDNAASWFGAVVTLGAAAGGILGGWLLDRAGRKLSLLLCTVPFVTGFAVITAARDVWMLLGGRLLTGLACGVASLVAPVYISEIAYPAVRGLLGSCVQLMVVTGILLAYVAGWVLEWRWLAVLGCVPPTLMLLLMCYMPETPRFLLTQHQYQEAMAALRFLWGSEEGWEEPPVGAEHQGFQLALLRRPGIYKPLIIGISLMVFQQLSGVNAIMFYANSIFEEAKFKDSSLASVTVGIIQVLFTAVAALIMDRAGRRLLLALSGVIMVFSMSAFGTYFKLTQSLPSNSSHVGLVPIAAEPVDVQVGLAWLAVGSMCLFIAGFAVGWGPIPWLLMSEIFPLHVKGVATGICVLTNWFMAFLVTKEFSSVMEMLRPYGAFWLTAAFCALSVLFTLTVVPETKGRTLEQVTAHFEGR</sequence>
<feature type="chain" id="PRO_0000050376" description="Solute carrier family 2, facilitated glucose transporter member 8">
    <location>
        <begin position="1"/>
        <end position="477"/>
    </location>
</feature>
<feature type="topological domain" description="Cytoplasmic" evidence="3">
    <location>
        <begin position="1"/>
        <end position="25"/>
    </location>
</feature>
<feature type="transmembrane region" description="Helical; Name=1" evidence="3">
    <location>
        <begin position="26"/>
        <end position="46"/>
    </location>
</feature>
<feature type="topological domain" description="Extracellular" evidence="3">
    <location>
        <begin position="47"/>
        <end position="70"/>
    </location>
</feature>
<feature type="transmembrane region" description="Helical; Name=2" evidence="3">
    <location>
        <begin position="71"/>
        <end position="91"/>
    </location>
</feature>
<feature type="topological domain" description="Cytoplasmic" evidence="3">
    <location>
        <begin position="92"/>
        <end position="96"/>
    </location>
</feature>
<feature type="transmembrane region" description="Helical; Name=3" evidence="3">
    <location>
        <begin position="97"/>
        <end position="117"/>
    </location>
</feature>
<feature type="topological domain" description="Extracellular" evidence="3">
    <location>
        <begin position="118"/>
        <end position="127"/>
    </location>
</feature>
<feature type="transmembrane region" description="Helical; Name=4" evidence="3">
    <location>
        <begin position="128"/>
        <end position="148"/>
    </location>
</feature>
<feature type="topological domain" description="Cytoplasmic" evidence="3">
    <location>
        <begin position="149"/>
        <end position="156"/>
    </location>
</feature>
<feature type="transmembrane region" description="Helical; Name=5" evidence="3">
    <location>
        <begin position="157"/>
        <end position="177"/>
    </location>
</feature>
<feature type="topological domain" description="Extracellular" evidence="3">
    <location>
        <begin position="178"/>
        <end position="182"/>
    </location>
</feature>
<feature type="transmembrane region" description="Helical; Name=6" evidence="3">
    <location>
        <begin position="183"/>
        <end position="203"/>
    </location>
</feature>
<feature type="topological domain" description="Cytoplasmic" evidence="3">
    <location>
        <begin position="204"/>
        <end position="257"/>
    </location>
</feature>
<feature type="transmembrane region" description="Helical; Name=7" evidence="3">
    <location>
        <begin position="258"/>
        <end position="278"/>
    </location>
</feature>
<feature type="topological domain" description="Extracellular" evidence="3">
    <location>
        <begin position="279"/>
        <end position="293"/>
    </location>
</feature>
<feature type="transmembrane region" description="Helical; Name=8" evidence="3">
    <location>
        <begin position="294"/>
        <end position="314"/>
    </location>
</feature>
<feature type="topological domain" description="Cytoplasmic" evidence="3">
    <location>
        <begin position="315"/>
        <end position="320"/>
    </location>
</feature>
<feature type="transmembrane region" description="Helical; Name=9" evidence="3">
    <location>
        <begin position="321"/>
        <end position="341"/>
    </location>
</feature>
<feature type="topological domain" description="Extracellular" evidence="3">
    <location>
        <begin position="342"/>
        <end position="367"/>
    </location>
</feature>
<feature type="transmembrane region" description="Helical; Name=10" evidence="3">
    <location>
        <begin position="368"/>
        <end position="388"/>
    </location>
</feature>
<feature type="topological domain" description="Cytoplasmic" evidence="3">
    <location>
        <begin position="389"/>
        <end position="404"/>
    </location>
</feature>
<feature type="transmembrane region" description="Helical; Name=11" evidence="3">
    <location>
        <begin position="405"/>
        <end position="425"/>
    </location>
</feature>
<feature type="topological domain" description="Extracellular" evidence="3">
    <location>
        <begin position="426"/>
        <end position="438"/>
    </location>
</feature>
<feature type="transmembrane region" description="Helical; Name=12" evidence="3">
    <location>
        <begin position="439"/>
        <end position="459"/>
    </location>
</feature>
<feature type="topological domain" description="Cytoplasmic" evidence="3">
    <location>
        <begin position="460"/>
        <end position="477"/>
    </location>
</feature>
<feature type="short sequence motif" description="Dileucine internalization motif" evidence="7">
    <location>
        <begin position="12"/>
        <end position="13"/>
    </location>
</feature>
<feature type="binding site" evidence="1">
    <location>
        <position position="162"/>
    </location>
    <ligand>
        <name>D-glucose</name>
        <dbReference type="ChEBI" id="CHEBI:4167"/>
    </ligand>
</feature>
<feature type="binding site" evidence="1">
    <location>
        <begin position="268"/>
        <end position="269"/>
    </location>
    <ligand>
        <name>D-glucose</name>
        <dbReference type="ChEBI" id="CHEBI:4167"/>
    </ligand>
</feature>
<feature type="binding site" evidence="1">
    <location>
        <position position="274"/>
    </location>
    <ligand>
        <name>D-glucose</name>
        <dbReference type="ChEBI" id="CHEBI:4167"/>
    </ligand>
</feature>
<feature type="binding site" evidence="1">
    <location>
        <position position="394"/>
    </location>
    <ligand>
        <name>D-glucose</name>
        <dbReference type="ChEBI" id="CHEBI:4167"/>
    </ligand>
</feature>
<feature type="glycosylation site" description="N-linked (GlcNAc...) asparagine" evidence="3">
    <location>
        <position position="350"/>
    </location>
</feature>
<feature type="mutagenesis site" description="Abolishes interaction with AP2B1." evidence="7">
    <original>LL</original>
    <variation>AA</variation>
    <location>
        <begin position="12"/>
        <end position="13"/>
    </location>
</feature>
<feature type="sequence conflict" description="In Ref. 1; CAB75719." evidence="12" ref="1">
    <original>S</original>
    <variation>N</variation>
    <location>
        <position position="39"/>
    </location>
</feature>
<feature type="sequence conflict" description="In Ref. 1; CAB75719 and 3; AAF78366." evidence="12" ref="1 3">
    <original>A</original>
    <variation>S</variation>
    <location>
        <position position="94"/>
    </location>
</feature>
<feature type="sequence conflict" description="In Ref. 1; CAB75719." evidence="12" ref="1">
    <original>S</original>
    <variation>N</variation>
    <location>
        <position position="429"/>
    </location>
</feature>
<dbReference type="EMBL" id="AJ245936">
    <property type="protein sequence ID" value="CAB75719.1"/>
    <property type="molecule type" value="mRNA"/>
</dbReference>
<dbReference type="EMBL" id="Y17802">
    <property type="protein sequence ID" value="CAB89815.1"/>
    <property type="molecule type" value="mRNA"/>
</dbReference>
<dbReference type="EMBL" id="AF232061">
    <property type="protein sequence ID" value="AAF78366.1"/>
    <property type="molecule type" value="mRNA"/>
</dbReference>
<dbReference type="EMBL" id="AJ413951">
    <property type="protein sequence ID" value="CAC88690.1"/>
    <property type="molecule type" value="Genomic_DNA"/>
</dbReference>
<dbReference type="EMBL" id="AY856043">
    <property type="protein sequence ID" value="AAX51785.1"/>
    <property type="molecule type" value="mRNA"/>
</dbReference>
<dbReference type="EMBL" id="AK081806">
    <property type="protein sequence ID" value="BAC38338.1"/>
    <property type="molecule type" value="mRNA"/>
</dbReference>
<dbReference type="EMBL" id="AK170319">
    <property type="protein sequence ID" value="BAE41714.1"/>
    <property type="molecule type" value="mRNA"/>
</dbReference>
<dbReference type="EMBL" id="AL731852">
    <property type="status" value="NOT_ANNOTATED_CDS"/>
    <property type="molecule type" value="Genomic_DNA"/>
</dbReference>
<dbReference type="EMBL" id="CH466542">
    <property type="protein sequence ID" value="EDL08590.1"/>
    <property type="molecule type" value="Genomic_DNA"/>
</dbReference>
<dbReference type="EMBL" id="BC090993">
    <property type="protein sequence ID" value="AAH90993.1"/>
    <property type="molecule type" value="mRNA"/>
</dbReference>
<dbReference type="CCDS" id="CCDS15937.1"/>
<dbReference type="RefSeq" id="NP_062361.1">
    <property type="nucleotide sequence ID" value="NM_019488.6"/>
</dbReference>
<dbReference type="SMR" id="Q9JIF3"/>
<dbReference type="FunCoup" id="Q9JIF3">
    <property type="interactions" value="55"/>
</dbReference>
<dbReference type="IntAct" id="Q9JIF3">
    <property type="interactions" value="7"/>
</dbReference>
<dbReference type="MINT" id="Q9JIF3"/>
<dbReference type="STRING" id="10090.ENSMUSP00000028129"/>
<dbReference type="TCDB" id="2.A.1.1.46">
    <property type="family name" value="the major facilitator superfamily (mfs)"/>
</dbReference>
<dbReference type="GlyCosmos" id="Q9JIF3">
    <property type="glycosylation" value="1 site, No reported glycans"/>
</dbReference>
<dbReference type="GlyGen" id="Q9JIF3">
    <property type="glycosylation" value="1 site"/>
</dbReference>
<dbReference type="PhosphoSitePlus" id="Q9JIF3"/>
<dbReference type="PaxDb" id="10090-ENSMUSP00000028129"/>
<dbReference type="ProteomicsDB" id="271350"/>
<dbReference type="Pumba" id="Q9JIF3"/>
<dbReference type="Antibodypedia" id="1986">
    <property type="antibodies" value="152 antibodies from 29 providers"/>
</dbReference>
<dbReference type="DNASU" id="56017"/>
<dbReference type="Ensembl" id="ENSMUST00000028129.13">
    <property type="protein sequence ID" value="ENSMUSP00000028129.8"/>
    <property type="gene ID" value="ENSMUSG00000026791.15"/>
</dbReference>
<dbReference type="GeneID" id="56017"/>
<dbReference type="KEGG" id="mmu:56017"/>
<dbReference type="UCSC" id="uc008jhf.1">
    <property type="organism name" value="mouse"/>
</dbReference>
<dbReference type="AGR" id="MGI:1860103"/>
<dbReference type="CTD" id="29988"/>
<dbReference type="MGI" id="MGI:1860103">
    <property type="gene designation" value="Slc2a8"/>
</dbReference>
<dbReference type="VEuPathDB" id="HostDB:ENSMUSG00000026791"/>
<dbReference type="eggNOG" id="KOG0254">
    <property type="taxonomic scope" value="Eukaryota"/>
</dbReference>
<dbReference type="GeneTree" id="ENSGT00940000158795"/>
<dbReference type="InParanoid" id="Q9JIF3"/>
<dbReference type="OMA" id="AQSANWF"/>
<dbReference type="OrthoDB" id="6612291at2759"/>
<dbReference type="PhylomeDB" id="Q9JIF3"/>
<dbReference type="TreeFam" id="TF325324"/>
<dbReference type="Reactome" id="R-MMU-189200">
    <property type="pathway name" value="Cellular hexose transport"/>
</dbReference>
<dbReference type="Reactome" id="R-MMU-8856825">
    <property type="pathway name" value="Cargo recognition for clathrin-mediated endocytosis"/>
</dbReference>
<dbReference type="Reactome" id="R-MMU-8856828">
    <property type="pathway name" value="Clathrin-mediated endocytosis"/>
</dbReference>
<dbReference type="BioGRID-ORCS" id="56017">
    <property type="hits" value="0 hits in 76 CRISPR screens"/>
</dbReference>
<dbReference type="ChiTaRS" id="Slc2a8">
    <property type="organism name" value="mouse"/>
</dbReference>
<dbReference type="PRO" id="PR:Q9JIF3"/>
<dbReference type="Proteomes" id="UP000000589">
    <property type="component" value="Chromosome 2"/>
</dbReference>
<dbReference type="RNAct" id="Q9JIF3">
    <property type="molecule type" value="protein"/>
</dbReference>
<dbReference type="Bgee" id="ENSMUSG00000026791">
    <property type="expression patterns" value="Expressed in spermatocyte and 197 other cell types or tissues"/>
</dbReference>
<dbReference type="ExpressionAtlas" id="Q9JIF3">
    <property type="expression patterns" value="baseline and differential"/>
</dbReference>
<dbReference type="GO" id="GO:0030659">
    <property type="term" value="C:cytoplasmic vesicle membrane"/>
    <property type="evidence" value="ECO:0007669"/>
    <property type="project" value="UniProtKB-SubCell"/>
</dbReference>
<dbReference type="GO" id="GO:0005886">
    <property type="term" value="C:plasma membrane"/>
    <property type="evidence" value="ECO:0000314"/>
    <property type="project" value="MGI"/>
</dbReference>
<dbReference type="GO" id="GO:0008021">
    <property type="term" value="C:synaptic vesicle"/>
    <property type="evidence" value="ECO:0007669"/>
    <property type="project" value="Ensembl"/>
</dbReference>
<dbReference type="GO" id="GO:0005536">
    <property type="term" value="F:D-glucose binding"/>
    <property type="evidence" value="ECO:0000314"/>
    <property type="project" value="MGI"/>
</dbReference>
<dbReference type="GO" id="GO:0055056">
    <property type="term" value="F:D-glucose transmembrane transporter activity"/>
    <property type="evidence" value="ECO:0000314"/>
    <property type="project" value="UniProtKB"/>
</dbReference>
<dbReference type="GO" id="GO:0033300">
    <property type="term" value="F:dehydroascorbic acid transmembrane transporter activity"/>
    <property type="evidence" value="ECO:0000314"/>
    <property type="project" value="UniProtKB"/>
</dbReference>
<dbReference type="GO" id="GO:0005353">
    <property type="term" value="F:fructose transmembrane transporter activity"/>
    <property type="evidence" value="ECO:0000314"/>
    <property type="project" value="UniProtKB"/>
</dbReference>
<dbReference type="GO" id="GO:0015284">
    <property type="term" value="F:fructose uniporter activity"/>
    <property type="evidence" value="ECO:0000266"/>
    <property type="project" value="MGI"/>
</dbReference>
<dbReference type="GO" id="GO:0005354">
    <property type="term" value="F:galactose transmembrane transporter activity"/>
    <property type="evidence" value="ECO:0000266"/>
    <property type="project" value="MGI"/>
</dbReference>
<dbReference type="GO" id="GO:1904659">
    <property type="term" value="P:D-glucose transmembrane transport"/>
    <property type="evidence" value="ECO:0000314"/>
    <property type="project" value="UniProtKB"/>
</dbReference>
<dbReference type="GO" id="GO:0070837">
    <property type="term" value="P:dehydroascorbic acid transport"/>
    <property type="evidence" value="ECO:0000314"/>
    <property type="project" value="UniProtKB"/>
</dbReference>
<dbReference type="GO" id="GO:0015755">
    <property type="term" value="P:fructose transmembrane transport"/>
    <property type="evidence" value="ECO:0000314"/>
    <property type="project" value="UniProtKB"/>
</dbReference>
<dbReference type="GO" id="GO:0015757">
    <property type="term" value="P:galactose transmembrane transport"/>
    <property type="evidence" value="ECO:0000266"/>
    <property type="project" value="MGI"/>
</dbReference>
<dbReference type="GO" id="GO:0006006">
    <property type="term" value="P:glucose metabolic process"/>
    <property type="evidence" value="ECO:0000304"/>
    <property type="project" value="MGI"/>
</dbReference>
<dbReference type="GO" id="GO:0008286">
    <property type="term" value="P:insulin receptor signaling pathway"/>
    <property type="evidence" value="ECO:0000314"/>
    <property type="project" value="MGI"/>
</dbReference>
<dbReference type="GO" id="GO:0007141">
    <property type="term" value="P:male meiosis I"/>
    <property type="evidence" value="ECO:0007669"/>
    <property type="project" value="Ensembl"/>
</dbReference>
<dbReference type="GO" id="GO:0001666">
    <property type="term" value="P:response to hypoxia"/>
    <property type="evidence" value="ECO:0000314"/>
    <property type="project" value="MGI"/>
</dbReference>
<dbReference type="FunFam" id="1.20.1250.20:FF:000055">
    <property type="entry name" value="Facilitated trehalose transporter Tret1-2 homolog"/>
    <property type="match status" value="1"/>
</dbReference>
<dbReference type="Gene3D" id="1.20.1250.20">
    <property type="entry name" value="MFS general substrate transporter like domains"/>
    <property type="match status" value="1"/>
</dbReference>
<dbReference type="InterPro" id="IPR020846">
    <property type="entry name" value="MFS_dom"/>
</dbReference>
<dbReference type="InterPro" id="IPR005828">
    <property type="entry name" value="MFS_sugar_transport-like"/>
</dbReference>
<dbReference type="InterPro" id="IPR036259">
    <property type="entry name" value="MFS_trans_sf"/>
</dbReference>
<dbReference type="InterPro" id="IPR050549">
    <property type="entry name" value="MFS_Trehalose_Transporter"/>
</dbReference>
<dbReference type="InterPro" id="IPR003663">
    <property type="entry name" value="Sugar/inositol_transpt"/>
</dbReference>
<dbReference type="InterPro" id="IPR005829">
    <property type="entry name" value="Sugar_transporter_CS"/>
</dbReference>
<dbReference type="NCBIfam" id="TIGR00879">
    <property type="entry name" value="SP"/>
    <property type="match status" value="1"/>
</dbReference>
<dbReference type="PANTHER" id="PTHR48021">
    <property type="match status" value="1"/>
</dbReference>
<dbReference type="PANTHER" id="PTHR48021:SF18">
    <property type="entry name" value="SOLUTE CARRIER FAMILY 2, FACILITATED GLUCOSE TRANSPORTER MEMBER 8"/>
    <property type="match status" value="1"/>
</dbReference>
<dbReference type="Pfam" id="PF00083">
    <property type="entry name" value="Sugar_tr"/>
    <property type="match status" value="1"/>
</dbReference>
<dbReference type="PRINTS" id="PR00171">
    <property type="entry name" value="SUGRTRNSPORT"/>
</dbReference>
<dbReference type="SUPFAM" id="SSF103473">
    <property type="entry name" value="MFS general substrate transporter"/>
    <property type="match status" value="1"/>
</dbReference>
<dbReference type="PROSITE" id="PS50850">
    <property type="entry name" value="MFS"/>
    <property type="match status" value="1"/>
</dbReference>
<dbReference type="PROSITE" id="PS00216">
    <property type="entry name" value="SUGAR_TRANSPORT_1"/>
    <property type="match status" value="2"/>
</dbReference>
<dbReference type="PROSITE" id="PS00217">
    <property type="entry name" value="SUGAR_TRANSPORT_2"/>
    <property type="match status" value="1"/>
</dbReference>
<evidence type="ECO:0000250" key="1">
    <source>
        <dbReference type="UniProtKB" id="P11169"/>
    </source>
</evidence>
<evidence type="ECO:0000250" key="2">
    <source>
        <dbReference type="UniProtKB" id="Q9JJZ1"/>
    </source>
</evidence>
<evidence type="ECO:0000255" key="3"/>
<evidence type="ECO:0000269" key="4">
    <source>
    </source>
</evidence>
<evidence type="ECO:0000269" key="5">
    <source>
    </source>
</evidence>
<evidence type="ECO:0000269" key="6">
    <source>
    </source>
</evidence>
<evidence type="ECO:0000269" key="7">
    <source>
    </source>
</evidence>
<evidence type="ECO:0000269" key="8">
    <source>
    </source>
</evidence>
<evidence type="ECO:0000269" key="9">
    <source>
    </source>
</evidence>
<evidence type="ECO:0000303" key="10">
    <source>
    </source>
</evidence>
<evidence type="ECO:0000303" key="11">
    <source>
    </source>
</evidence>
<evidence type="ECO:0000305" key="12"/>
<evidence type="ECO:0000312" key="13">
    <source>
        <dbReference type="MGI" id="MGI:1860103"/>
    </source>
</evidence>
<organism>
    <name type="scientific">Mus musculus</name>
    <name type="common">Mouse</name>
    <dbReference type="NCBI Taxonomy" id="10090"/>
    <lineage>
        <taxon>Eukaryota</taxon>
        <taxon>Metazoa</taxon>
        <taxon>Chordata</taxon>
        <taxon>Craniata</taxon>
        <taxon>Vertebrata</taxon>
        <taxon>Euteleostomi</taxon>
        <taxon>Mammalia</taxon>
        <taxon>Eutheria</taxon>
        <taxon>Euarchontoglires</taxon>
        <taxon>Glires</taxon>
        <taxon>Rodentia</taxon>
        <taxon>Myomorpha</taxon>
        <taxon>Muroidea</taxon>
        <taxon>Muridae</taxon>
        <taxon>Murinae</taxon>
        <taxon>Mus</taxon>
        <taxon>Mus</taxon>
    </lineage>
</organism>
<keyword id="KW-1003">Cell membrane</keyword>
<keyword id="KW-0968">Cytoplasmic vesicle</keyword>
<keyword id="KW-0325">Glycoprotein</keyword>
<keyword id="KW-0472">Membrane</keyword>
<keyword id="KW-1185">Reference proteome</keyword>
<keyword id="KW-0762">Sugar transport</keyword>
<keyword id="KW-0812">Transmembrane</keyword>
<keyword id="KW-1133">Transmembrane helix</keyword>
<keyword id="KW-0813">Transport</keyword>
<protein>
    <recommendedName>
        <fullName evidence="12">Solute carrier family 2, facilitated glucose transporter member 8</fullName>
    </recommendedName>
    <alternativeName>
        <fullName evidence="11">Glucose transporter type 8</fullName>
        <shortName evidence="11">GLUT-8</shortName>
    </alternativeName>
    <alternativeName>
        <fullName evidence="10">Glucose transporter type X1</fullName>
    </alternativeName>
</protein>
<comment type="function">
    <text evidence="4 5 8 9">Insulin-regulated facilitative hexose transporter that mediates the transport of glucose and fructose (PubMed:10821868, PubMed:10860996, PubMed:23396969). Facilitates hepatic influx of dietary trehalose, which in turn inhibits glucose and fructose influx triggering a starvation signal and hepatic autophagy through activation of AMPK and ULK1 (PubMed:27922102). Also able to mediate the transport of dehydroascorbate (PubMed:23396969).</text>
</comment>
<comment type="catalytic activity">
    <reaction evidence="8">
        <text>D-glucose(out) = D-glucose(in)</text>
        <dbReference type="Rhea" id="RHEA:60376"/>
        <dbReference type="ChEBI" id="CHEBI:4167"/>
    </reaction>
</comment>
<comment type="catalytic activity">
    <reaction evidence="8">
        <text>D-fructose(out) = D-fructose(in)</text>
        <dbReference type="Rhea" id="RHEA:60372"/>
        <dbReference type="ChEBI" id="CHEBI:37721"/>
    </reaction>
</comment>
<comment type="catalytic activity">
    <reaction evidence="8">
        <text>L-dehydroascorbate(out) = L-dehydroascorbate(in)</text>
        <dbReference type="Rhea" id="RHEA:60380"/>
        <dbReference type="ChEBI" id="CHEBI:58539"/>
    </reaction>
</comment>
<comment type="catalytic activity">
    <reaction evidence="9">
        <text>alpha,alpha-trehalose(in) = alpha,alpha-trehalose(out)</text>
        <dbReference type="Rhea" id="RHEA:17629"/>
        <dbReference type="ChEBI" id="CHEBI:16551"/>
    </reaction>
</comment>
<comment type="activity regulation">
    <text evidence="4">Inhibited by cytochalasin B.</text>
</comment>
<comment type="biophysicochemical properties">
    <kinetics>
        <KM evidence="8">2.33 mM for dehydroascorbate</KM>
    </kinetics>
</comment>
<comment type="subunit">
    <text evidence="7 8">Interacts with AP2B1 (PubMed:16723738). Also able to mediate the transport of dehydroascorbate (PubMed:23396969).</text>
</comment>
<comment type="subcellular location">
    <subcellularLocation>
        <location evidence="5">Cell membrane</location>
        <topology evidence="3">Multi-pass membrane protein</topology>
    </subcellularLocation>
    <subcellularLocation>
        <location evidence="2">Cytoplasmic vesicle membrane</location>
        <topology evidence="3">Multi-pass membrane protein</topology>
    </subcellularLocation>
    <text evidence="2">Principally intracellular. May move between intracellular vesicles and the plasma membrane. The dileucine internalization motif is critical for intracellular sequestration.</text>
</comment>
<comment type="tissue specificity">
    <text evidence="5">Highest level of expression in placenta and testis. Highly expressed in adult and pubertal testis, but not prepubertal testis. Lower levels of expression in brain, liver, heart, kidney, fat and skeletal muscle.</text>
</comment>
<comment type="developmental stage">
    <text evidence="5">High expression in blastocysts.</text>
</comment>
<comment type="induction">
    <text evidence="6">Inhibited under glucose deprivation.</text>
</comment>
<comment type="similarity">
    <text evidence="12">Belongs to the major facilitator superfamily. Sugar transporter (TC 2.A.1.1) family. Glucose transporter subfamily.</text>
</comment>
<gene>
    <name evidence="13" type="primary">Slc2a8</name>
    <name evidence="11" type="synonym">Glut8</name>
    <name evidence="10" type="synonym">GlutX1</name>
</gene>